<feature type="chain" id="PRO_0000329726" description="Polyribonucleotide nucleotidyltransferase">
    <location>
        <begin position="1"/>
        <end position="762"/>
    </location>
</feature>
<feature type="domain" description="KH" evidence="1">
    <location>
        <begin position="597"/>
        <end position="656"/>
    </location>
</feature>
<feature type="domain" description="S1 motif" evidence="1">
    <location>
        <begin position="668"/>
        <end position="737"/>
    </location>
</feature>
<feature type="binding site" evidence="1">
    <location>
        <position position="531"/>
    </location>
    <ligand>
        <name>Mg(2+)</name>
        <dbReference type="ChEBI" id="CHEBI:18420"/>
    </ligand>
</feature>
<feature type="binding site" evidence="1">
    <location>
        <position position="537"/>
    </location>
    <ligand>
        <name>Mg(2+)</name>
        <dbReference type="ChEBI" id="CHEBI:18420"/>
    </ligand>
</feature>
<comment type="function">
    <text evidence="1">Involved in mRNA degradation. Catalyzes the phosphorolysis of single-stranded polyribonucleotides processively in the 3'- to 5'-direction.</text>
</comment>
<comment type="catalytic activity">
    <reaction evidence="1">
        <text>RNA(n+1) + phosphate = RNA(n) + a ribonucleoside 5'-diphosphate</text>
        <dbReference type="Rhea" id="RHEA:22096"/>
        <dbReference type="Rhea" id="RHEA-COMP:14527"/>
        <dbReference type="Rhea" id="RHEA-COMP:17342"/>
        <dbReference type="ChEBI" id="CHEBI:43474"/>
        <dbReference type="ChEBI" id="CHEBI:57930"/>
        <dbReference type="ChEBI" id="CHEBI:140395"/>
        <dbReference type="EC" id="2.7.7.8"/>
    </reaction>
</comment>
<comment type="cofactor">
    <cofactor evidence="1">
        <name>Mg(2+)</name>
        <dbReference type="ChEBI" id="CHEBI:18420"/>
    </cofactor>
</comment>
<comment type="subcellular location">
    <subcellularLocation>
        <location evidence="1">Cytoplasm</location>
    </subcellularLocation>
</comment>
<comment type="similarity">
    <text evidence="1">Belongs to the polyribonucleotide nucleotidyltransferase family.</text>
</comment>
<comment type="sequence caution" evidence="2">
    <conflict type="erroneous initiation">
        <sequence resource="EMBL-CDS" id="ABL04566"/>
    </conflict>
</comment>
<evidence type="ECO:0000255" key="1">
    <source>
        <dbReference type="HAMAP-Rule" id="MF_01595"/>
    </source>
</evidence>
<evidence type="ECO:0000305" key="2"/>
<keyword id="KW-0963">Cytoplasm</keyword>
<keyword id="KW-0460">Magnesium</keyword>
<keyword id="KW-0479">Metal-binding</keyword>
<keyword id="KW-0548">Nucleotidyltransferase</keyword>
<keyword id="KW-0694">RNA-binding</keyword>
<keyword id="KW-0808">Transferase</keyword>
<protein>
    <recommendedName>
        <fullName evidence="1">Polyribonucleotide nucleotidyltransferase</fullName>
        <ecNumber evidence="1">2.7.7.8</ecNumber>
    </recommendedName>
    <alternativeName>
        <fullName evidence="1">Polynucleotide phosphorylase</fullName>
        <shortName evidence="1">PNPase</shortName>
    </alternativeName>
</protein>
<organism>
    <name type="scientific">Mycobacterium ulcerans (strain Agy99)</name>
    <dbReference type="NCBI Taxonomy" id="362242"/>
    <lineage>
        <taxon>Bacteria</taxon>
        <taxon>Bacillati</taxon>
        <taxon>Actinomycetota</taxon>
        <taxon>Actinomycetes</taxon>
        <taxon>Mycobacteriales</taxon>
        <taxon>Mycobacteriaceae</taxon>
        <taxon>Mycobacterium</taxon>
        <taxon>Mycobacterium ulcerans group</taxon>
    </lineage>
</organism>
<sequence length="762" mass="80715">MSVAETEEGVFEATATIDNGSFGTRTIRFETGRLAQQAAGSVVGYLDDENMLLSATTASKNPKEHFNFFPLTVDVEERMYAAGRIPGSFFRREGRPSTDAILTCRLIDRPLRPSFVNGLRNEIQVVVTILSLDPNDLYDVVAINAASASTQLAGLPFSGPVGGVRVALIDGQWVAFPNVEQLERAVFDMVVAGRIVGTEEDGTPDVAIMMVEAEATDKVIELVEGGAPAPTESVVAQGLEAAKPFIAALCTAQQELADASGATVKTGAEYPVFPEYGDDVYYAVSSVATDGLAAALTIGGKAERNQRTEEIKAEVLERLADTYEGREKEIGAAFRSLTKKLVRQRIVTDHFRIDGRGVTDIRALSAEVALVPRAHGSALFERGETQILGVTTLDMVKMAQQIDSLGPETTKRYMHHYNFPPFSTGETGRVGSPKRREIGHGALAERALMPVLPSVEEFPYAIRQVSEALGSNGSTSMGSVCASTLALLNAGVPLKAPVAGIAMGLVSDDVEVDGKTERRFVTLTDILGAEDAFGDMDFKVAGTKDFVTALQLDTKLDGIPSQVLAGALAQAKDARLTILEVMAEAIDTPDEMSPYAPRVTTIKVPVDKIGEVIGPKGKVINSITEETRAQISIEDDGTVFVGATDGPSAQAAIDKINAIANPQLPTVGERFLGTVVKTTDFGAFVALLPGRDGLVHISKLGKGKRIAKVEDVVNVGDKLRVEIADIDKRGKISLVLVAEDDDSAAAAAADSPAPADAATASS</sequence>
<dbReference type="EC" id="2.7.7.8" evidence="1"/>
<dbReference type="EMBL" id="CP000325">
    <property type="protein sequence ID" value="ABL04566.1"/>
    <property type="status" value="ALT_INIT"/>
    <property type="molecule type" value="Genomic_DNA"/>
</dbReference>
<dbReference type="RefSeq" id="WP_071498186.1">
    <property type="nucleotide sequence ID" value="NC_008611.1"/>
</dbReference>
<dbReference type="SMR" id="A0PQE7"/>
<dbReference type="KEGG" id="mul:MUL_2150"/>
<dbReference type="eggNOG" id="COG1185">
    <property type="taxonomic scope" value="Bacteria"/>
</dbReference>
<dbReference type="HOGENOM" id="CLU_004217_2_2_11"/>
<dbReference type="Proteomes" id="UP000000765">
    <property type="component" value="Chromosome"/>
</dbReference>
<dbReference type="GO" id="GO:0005829">
    <property type="term" value="C:cytosol"/>
    <property type="evidence" value="ECO:0007669"/>
    <property type="project" value="TreeGrafter"/>
</dbReference>
<dbReference type="GO" id="GO:0000175">
    <property type="term" value="F:3'-5'-RNA exonuclease activity"/>
    <property type="evidence" value="ECO:0007669"/>
    <property type="project" value="TreeGrafter"/>
</dbReference>
<dbReference type="GO" id="GO:0000287">
    <property type="term" value="F:magnesium ion binding"/>
    <property type="evidence" value="ECO:0007669"/>
    <property type="project" value="UniProtKB-UniRule"/>
</dbReference>
<dbReference type="GO" id="GO:0004654">
    <property type="term" value="F:polyribonucleotide nucleotidyltransferase activity"/>
    <property type="evidence" value="ECO:0007669"/>
    <property type="project" value="UniProtKB-UniRule"/>
</dbReference>
<dbReference type="GO" id="GO:0003723">
    <property type="term" value="F:RNA binding"/>
    <property type="evidence" value="ECO:0007669"/>
    <property type="project" value="UniProtKB-UniRule"/>
</dbReference>
<dbReference type="GO" id="GO:0006402">
    <property type="term" value="P:mRNA catabolic process"/>
    <property type="evidence" value="ECO:0007669"/>
    <property type="project" value="UniProtKB-UniRule"/>
</dbReference>
<dbReference type="GO" id="GO:0006396">
    <property type="term" value="P:RNA processing"/>
    <property type="evidence" value="ECO:0007669"/>
    <property type="project" value="InterPro"/>
</dbReference>
<dbReference type="CDD" id="cd02393">
    <property type="entry name" value="KH-I_PNPase"/>
    <property type="match status" value="1"/>
</dbReference>
<dbReference type="CDD" id="cd11364">
    <property type="entry name" value="RNase_PH_PNPase_2"/>
    <property type="match status" value="1"/>
</dbReference>
<dbReference type="CDD" id="cd04472">
    <property type="entry name" value="S1_PNPase"/>
    <property type="match status" value="1"/>
</dbReference>
<dbReference type="FunFam" id="2.40.50.140:FF:000069">
    <property type="entry name" value="Polyribonucleotide nucleotidyltransferase"/>
    <property type="match status" value="1"/>
</dbReference>
<dbReference type="FunFam" id="3.30.1370.10:FF:000001">
    <property type="entry name" value="Polyribonucleotide nucleotidyltransferase"/>
    <property type="match status" value="1"/>
</dbReference>
<dbReference type="FunFam" id="3.30.230.70:FF:000001">
    <property type="entry name" value="Polyribonucleotide nucleotidyltransferase"/>
    <property type="match status" value="1"/>
</dbReference>
<dbReference type="FunFam" id="3.30.230.70:FF:000002">
    <property type="entry name" value="Polyribonucleotide nucleotidyltransferase"/>
    <property type="match status" value="1"/>
</dbReference>
<dbReference type="Gene3D" id="3.30.230.70">
    <property type="entry name" value="GHMP Kinase, N-terminal domain"/>
    <property type="match status" value="2"/>
</dbReference>
<dbReference type="Gene3D" id="3.30.1370.10">
    <property type="entry name" value="K Homology domain, type 1"/>
    <property type="match status" value="1"/>
</dbReference>
<dbReference type="Gene3D" id="2.40.50.140">
    <property type="entry name" value="Nucleic acid-binding proteins"/>
    <property type="match status" value="1"/>
</dbReference>
<dbReference type="HAMAP" id="MF_01595">
    <property type="entry name" value="PNPase"/>
    <property type="match status" value="1"/>
</dbReference>
<dbReference type="InterPro" id="IPR001247">
    <property type="entry name" value="ExoRNase_PH_dom1"/>
</dbReference>
<dbReference type="InterPro" id="IPR036345">
    <property type="entry name" value="ExoRNase_PH_dom2_sf"/>
</dbReference>
<dbReference type="InterPro" id="IPR014069">
    <property type="entry name" value="GPSI/PNP"/>
</dbReference>
<dbReference type="InterPro" id="IPR004087">
    <property type="entry name" value="KH_dom"/>
</dbReference>
<dbReference type="InterPro" id="IPR004088">
    <property type="entry name" value="KH_dom_type_1"/>
</dbReference>
<dbReference type="InterPro" id="IPR036612">
    <property type="entry name" value="KH_dom_type_1_sf"/>
</dbReference>
<dbReference type="InterPro" id="IPR012340">
    <property type="entry name" value="NA-bd_OB-fold"/>
</dbReference>
<dbReference type="InterPro" id="IPR012162">
    <property type="entry name" value="PNPase"/>
</dbReference>
<dbReference type="InterPro" id="IPR027408">
    <property type="entry name" value="PNPase/RNase_PH_dom_sf"/>
</dbReference>
<dbReference type="InterPro" id="IPR015848">
    <property type="entry name" value="PNPase_PH_RNA-bd_bac/org-type"/>
</dbReference>
<dbReference type="InterPro" id="IPR036456">
    <property type="entry name" value="PNPase_PH_RNA-bd_sf"/>
</dbReference>
<dbReference type="InterPro" id="IPR020568">
    <property type="entry name" value="Ribosomal_Su5_D2-typ_SF"/>
</dbReference>
<dbReference type="InterPro" id="IPR003029">
    <property type="entry name" value="S1_domain"/>
</dbReference>
<dbReference type="NCBIfam" id="TIGR03591">
    <property type="entry name" value="polynuc_phos"/>
    <property type="match status" value="1"/>
</dbReference>
<dbReference type="NCBIfam" id="TIGR02696">
    <property type="entry name" value="pppGpp_PNP"/>
    <property type="match status" value="1"/>
</dbReference>
<dbReference type="NCBIfam" id="NF008805">
    <property type="entry name" value="PRK11824.1"/>
    <property type="match status" value="1"/>
</dbReference>
<dbReference type="PANTHER" id="PTHR11252">
    <property type="entry name" value="POLYRIBONUCLEOTIDE NUCLEOTIDYLTRANSFERASE"/>
    <property type="match status" value="1"/>
</dbReference>
<dbReference type="PANTHER" id="PTHR11252:SF0">
    <property type="entry name" value="POLYRIBONUCLEOTIDE NUCLEOTIDYLTRANSFERASE 1, MITOCHONDRIAL"/>
    <property type="match status" value="1"/>
</dbReference>
<dbReference type="Pfam" id="PF00013">
    <property type="entry name" value="KH_1"/>
    <property type="match status" value="1"/>
</dbReference>
<dbReference type="Pfam" id="PF03726">
    <property type="entry name" value="PNPase"/>
    <property type="match status" value="1"/>
</dbReference>
<dbReference type="Pfam" id="PF01138">
    <property type="entry name" value="RNase_PH"/>
    <property type="match status" value="2"/>
</dbReference>
<dbReference type="Pfam" id="PF00575">
    <property type="entry name" value="S1"/>
    <property type="match status" value="1"/>
</dbReference>
<dbReference type="PIRSF" id="PIRSF005499">
    <property type="entry name" value="PNPase"/>
    <property type="match status" value="1"/>
</dbReference>
<dbReference type="SMART" id="SM00322">
    <property type="entry name" value="KH"/>
    <property type="match status" value="1"/>
</dbReference>
<dbReference type="SMART" id="SM00316">
    <property type="entry name" value="S1"/>
    <property type="match status" value="1"/>
</dbReference>
<dbReference type="SUPFAM" id="SSF54791">
    <property type="entry name" value="Eukaryotic type KH-domain (KH-domain type I)"/>
    <property type="match status" value="1"/>
</dbReference>
<dbReference type="SUPFAM" id="SSF50249">
    <property type="entry name" value="Nucleic acid-binding proteins"/>
    <property type="match status" value="1"/>
</dbReference>
<dbReference type="SUPFAM" id="SSF46915">
    <property type="entry name" value="Polynucleotide phosphorylase/guanosine pentaphosphate synthase (PNPase/GPSI), domain 3"/>
    <property type="match status" value="1"/>
</dbReference>
<dbReference type="SUPFAM" id="SSF55666">
    <property type="entry name" value="Ribonuclease PH domain 2-like"/>
    <property type="match status" value="2"/>
</dbReference>
<dbReference type="SUPFAM" id="SSF54211">
    <property type="entry name" value="Ribosomal protein S5 domain 2-like"/>
    <property type="match status" value="2"/>
</dbReference>
<dbReference type="PROSITE" id="PS50084">
    <property type="entry name" value="KH_TYPE_1"/>
    <property type="match status" value="1"/>
</dbReference>
<dbReference type="PROSITE" id="PS50126">
    <property type="entry name" value="S1"/>
    <property type="match status" value="1"/>
</dbReference>
<name>PNP_MYCUA</name>
<proteinExistence type="inferred from homology"/>
<accession>A0PQE7</accession>
<gene>
    <name evidence="1" type="primary">pnp</name>
    <name type="ordered locus">MUL_2150</name>
</gene>
<reference key="1">
    <citation type="journal article" date="2007" name="Genome Res.">
        <title>Reductive evolution and niche adaptation inferred from the genome of Mycobacterium ulcerans, the causative agent of Buruli ulcer.</title>
        <authorList>
            <person name="Stinear T.P."/>
            <person name="Seemann T."/>
            <person name="Pidot S."/>
            <person name="Frigui W."/>
            <person name="Reysset G."/>
            <person name="Garnier T."/>
            <person name="Meurice G."/>
            <person name="Simon D."/>
            <person name="Bouchier C."/>
            <person name="Ma L."/>
            <person name="Tichit M."/>
            <person name="Porter J.L."/>
            <person name="Ryan J."/>
            <person name="Johnson P.D.R."/>
            <person name="Davies J.K."/>
            <person name="Jenkin G.A."/>
            <person name="Small P.L.C."/>
            <person name="Jones L.M."/>
            <person name="Tekaia F."/>
            <person name="Laval F."/>
            <person name="Daffe M."/>
            <person name="Parkhill J."/>
            <person name="Cole S.T."/>
        </authorList>
    </citation>
    <scope>NUCLEOTIDE SEQUENCE [LARGE SCALE GENOMIC DNA]</scope>
    <source>
        <strain>Agy99</strain>
    </source>
</reference>